<reference key="1">
    <citation type="journal article" date="2001" name="Plant Cell">
        <title>Peroxisomal metabolic function is required for appressorium-mediated plant infection by Colletotrichum lagenarium.</title>
        <authorList>
            <person name="Kimura A."/>
            <person name="Takano Y."/>
            <person name="Furusawa I."/>
            <person name="Okuno T."/>
        </authorList>
    </citation>
    <scope>NUCLEOTIDE SEQUENCE [GENOMIC DNA]</scope>
    <scope>FUNCTION</scope>
    <source>
        <strain>104-T / ATCC 96160 / CBS 514.97 / LARS 414 / MAFF 240422</strain>
    </source>
</reference>
<reference key="2">
    <citation type="journal article" date="2013" name="New Phytol.">
        <title>Comparative genomic and transcriptomic analyses reveal the hemibiotrophic stage shift of Colletotrichum fungi.</title>
        <authorList>
            <person name="Gan P."/>
            <person name="Ikeda K."/>
            <person name="Irieda H."/>
            <person name="Narusaka M."/>
            <person name="O'Connell R.J."/>
            <person name="Narusaka Y."/>
            <person name="Takano Y."/>
            <person name="Kubo Y."/>
            <person name="Shirasu K."/>
        </authorList>
    </citation>
    <scope>NUCLEOTIDE SEQUENCE [LARGE SCALE GENOMIC DNA]</scope>
    <source>
        <strain>104-T / ATCC 96160 / CBS 514.97 / LARS 414 / MAFF 240422</strain>
    </source>
</reference>
<reference key="3">
    <citation type="journal article" date="2019" name="Mol. Plant Microbe Interact.">
        <title>Genome sequence resources for four phytopathogenic fungi from the Colletotrichum orbiculare species complex.</title>
        <authorList>
            <person name="Gan P."/>
            <person name="Tsushima A."/>
            <person name="Narusaka M."/>
            <person name="Narusaka Y."/>
            <person name="Takano Y."/>
            <person name="Kubo Y."/>
            <person name="Shirasu K."/>
        </authorList>
    </citation>
    <scope>GENOME REANNOTATION</scope>
    <source>
        <strain>104-T / ATCC 96160 / CBS 514.97 / LARS 414 / MAFF 240422</strain>
    </source>
</reference>
<organism>
    <name type="scientific">Colletotrichum orbiculare (strain 104-T / ATCC 96160 / CBS 514.97 / LARS 414 / MAFF 240422)</name>
    <name type="common">Cucumber anthracnose fungus</name>
    <name type="synonym">Colletotrichum lagenarium</name>
    <dbReference type="NCBI Taxonomy" id="1213857"/>
    <lineage>
        <taxon>Eukaryota</taxon>
        <taxon>Fungi</taxon>
        <taxon>Dikarya</taxon>
        <taxon>Ascomycota</taxon>
        <taxon>Pezizomycotina</taxon>
        <taxon>Sordariomycetes</taxon>
        <taxon>Hypocreomycetidae</taxon>
        <taxon>Glomerellales</taxon>
        <taxon>Glomerellaceae</taxon>
        <taxon>Colletotrichum</taxon>
        <taxon>Colletotrichum orbiculare species complex</taxon>
    </lineage>
</organism>
<dbReference type="EC" id="3.6.4.-" evidence="1"/>
<dbReference type="EMBL" id="AF343063">
    <property type="protein sequence ID" value="AAK16738.1"/>
    <property type="molecule type" value="Genomic_DNA"/>
</dbReference>
<dbReference type="EMBL" id="KB725690">
    <property type="protein sequence ID" value="ENH87571.1"/>
    <property type="molecule type" value="Genomic_DNA"/>
</dbReference>
<dbReference type="EMBL" id="AMCV02000003">
    <property type="protein sequence ID" value="TDZ24914.1"/>
    <property type="molecule type" value="Genomic_DNA"/>
</dbReference>
<dbReference type="SMR" id="Q9C1E9"/>
<dbReference type="STRING" id="1213857.Q9C1E9"/>
<dbReference type="EnsemblFungi" id="ENH87571">
    <property type="protein sequence ID" value="ENH87571"/>
    <property type="gene ID" value="Cob_00508"/>
</dbReference>
<dbReference type="eggNOG" id="KOG0736">
    <property type="taxonomic scope" value="Eukaryota"/>
</dbReference>
<dbReference type="HOGENOM" id="CLU_000688_0_2_1"/>
<dbReference type="OrthoDB" id="5553750at2759"/>
<dbReference type="PHI-base" id="PHI:226"/>
<dbReference type="Proteomes" id="UP000014480">
    <property type="component" value="Unassembled WGS sequence"/>
</dbReference>
<dbReference type="GO" id="GO:0005829">
    <property type="term" value="C:cytosol"/>
    <property type="evidence" value="ECO:0007669"/>
    <property type="project" value="UniProtKB-SubCell"/>
</dbReference>
<dbReference type="GO" id="GO:0005778">
    <property type="term" value="C:peroxisomal membrane"/>
    <property type="evidence" value="ECO:0007669"/>
    <property type="project" value="UniProtKB-SubCell"/>
</dbReference>
<dbReference type="GO" id="GO:0005524">
    <property type="term" value="F:ATP binding"/>
    <property type="evidence" value="ECO:0007669"/>
    <property type="project" value="UniProtKB-KW"/>
</dbReference>
<dbReference type="GO" id="GO:0016887">
    <property type="term" value="F:ATP hydrolysis activity"/>
    <property type="evidence" value="ECO:0007669"/>
    <property type="project" value="InterPro"/>
</dbReference>
<dbReference type="GO" id="GO:0016558">
    <property type="term" value="P:protein import into peroxisome matrix"/>
    <property type="evidence" value="ECO:0007669"/>
    <property type="project" value="TreeGrafter"/>
</dbReference>
<dbReference type="CDD" id="cd19527">
    <property type="entry name" value="RecA-like_PEX6_r2"/>
    <property type="match status" value="1"/>
</dbReference>
<dbReference type="FunFam" id="3.40.50.300:FF:000109">
    <property type="entry name" value="Peroxisomal biogenesis factor 6"/>
    <property type="match status" value="1"/>
</dbReference>
<dbReference type="FunFam" id="1.10.8.60:FF:000039">
    <property type="entry name" value="peroxisome biogenesis factor 6"/>
    <property type="match status" value="1"/>
</dbReference>
<dbReference type="Gene3D" id="1.10.8.60">
    <property type="match status" value="2"/>
</dbReference>
<dbReference type="Gene3D" id="3.40.50.300">
    <property type="entry name" value="P-loop containing nucleotide triphosphate hydrolases"/>
    <property type="match status" value="2"/>
</dbReference>
<dbReference type="InterPro" id="IPR003593">
    <property type="entry name" value="AAA+_ATPase"/>
</dbReference>
<dbReference type="InterPro" id="IPR050168">
    <property type="entry name" value="AAA_ATPase_domain"/>
</dbReference>
<dbReference type="InterPro" id="IPR003959">
    <property type="entry name" value="ATPase_AAA_core"/>
</dbReference>
<dbReference type="InterPro" id="IPR003960">
    <property type="entry name" value="ATPase_AAA_CS"/>
</dbReference>
<dbReference type="InterPro" id="IPR027417">
    <property type="entry name" value="P-loop_NTPase"/>
</dbReference>
<dbReference type="InterPro" id="IPR056995">
    <property type="entry name" value="PEX6_4th_dom"/>
</dbReference>
<dbReference type="InterPro" id="IPR047533">
    <property type="entry name" value="RecA-like_PEX6_r2"/>
</dbReference>
<dbReference type="PANTHER" id="PTHR23077">
    <property type="entry name" value="AAA-FAMILY ATPASE"/>
    <property type="match status" value="1"/>
</dbReference>
<dbReference type="PANTHER" id="PTHR23077:SF9">
    <property type="entry name" value="PEROXISOMAL ATPASE PEX6"/>
    <property type="match status" value="1"/>
</dbReference>
<dbReference type="Pfam" id="PF00004">
    <property type="entry name" value="AAA"/>
    <property type="match status" value="1"/>
</dbReference>
<dbReference type="Pfam" id="PF23315">
    <property type="entry name" value="PEX6_4th"/>
    <property type="match status" value="1"/>
</dbReference>
<dbReference type="Pfam" id="PF23120">
    <property type="entry name" value="PEX6_N"/>
    <property type="match status" value="1"/>
</dbReference>
<dbReference type="SMART" id="SM00382">
    <property type="entry name" value="AAA"/>
    <property type="match status" value="1"/>
</dbReference>
<dbReference type="SUPFAM" id="SSF52540">
    <property type="entry name" value="P-loop containing nucleoside triphosphate hydrolases"/>
    <property type="match status" value="2"/>
</dbReference>
<dbReference type="PROSITE" id="PS00674">
    <property type="entry name" value="AAA"/>
    <property type="match status" value="1"/>
</dbReference>
<gene>
    <name type="primary">PEX6</name>
    <name type="ORF">Cob_00508</name>
    <name type="ORF">Cob_v002161</name>
</gene>
<comment type="function">
    <text evidence="1 4">Component of the PEX1-PEX6 AAA ATPase complex, a protein dislocase complex that mediates the ATP-dependent extraction of the PEX5 receptor from peroxisomal membranes, an essential step for PEX5 recycling (PubMed:11487704). Specifically recognizes PEX5 monoubiquitinated at 'Cys-6', and pulls it out of the peroxisome lumen through the PEX2-PEX10-PEX12 retrotranslocation channel (By similarity). Extraction by the PEX1-PEX6 AAA ATPase complex is accompanied by unfolding of the TPR repeats and release of bound cargo from PEX5 (By similarity).</text>
</comment>
<comment type="catalytic activity">
    <reaction evidence="1">
        <text>ATP + H2O = ADP + phosphate + H(+)</text>
        <dbReference type="Rhea" id="RHEA:13065"/>
        <dbReference type="ChEBI" id="CHEBI:15377"/>
        <dbReference type="ChEBI" id="CHEBI:15378"/>
        <dbReference type="ChEBI" id="CHEBI:30616"/>
        <dbReference type="ChEBI" id="CHEBI:43474"/>
        <dbReference type="ChEBI" id="CHEBI:456216"/>
    </reaction>
    <physiologicalReaction direction="left-to-right" evidence="1">
        <dbReference type="Rhea" id="RHEA:13066"/>
    </physiologicalReaction>
</comment>
<comment type="subunit">
    <text evidence="1">Interacts with PEX1; forming the PEX1-PEX6 AAA ATPase complex, which is composed of a heterohexamer formed by a trimer of PEX1-PEX6 dimers.</text>
</comment>
<comment type="subcellular location">
    <subcellularLocation>
        <location evidence="1">Cytoplasm</location>
        <location evidence="1">Cytosol</location>
    </subcellularLocation>
    <subcellularLocation>
        <location evidence="1">Peroxisome membrane</location>
        <topology evidence="1">Peripheral membrane protein</topology>
        <orientation evidence="1">Cytoplasmic side</orientation>
    </subcellularLocation>
</comment>
<comment type="similarity">
    <text evidence="5">Belongs to the AAA ATPase family.</text>
</comment>
<evidence type="ECO:0000250" key="1">
    <source>
        <dbReference type="UniProtKB" id="P33760"/>
    </source>
</evidence>
<evidence type="ECO:0000255" key="2"/>
<evidence type="ECO:0000256" key="3">
    <source>
        <dbReference type="SAM" id="MobiDB-lite"/>
    </source>
</evidence>
<evidence type="ECO:0000269" key="4">
    <source>
    </source>
</evidence>
<evidence type="ECO:0000305" key="5"/>
<sequence length="1388" mass="149912">MTTSELVPPPPARRSPRTRRRRQDKPALSARLVLDDHEINGDVGVLSEDLFTDLFPHLRNVPSREDGSEDIHHVAIAPWEPSPSPTETAWTVVPVLKSSALKPSTVQFSPSSLSLQSFATILQQVAPSKLSSHSRSGIEVQILDVVALSLDTVFVSLESELTKRLEQGEGTFFRDRPNKGKGKAPAQPDTPEDRLISALRVALGSLKVLHSGDLFSLPLPPHPVTHVPPNPGKIMLCEPVSQGILSDDTKIVLMRGRVHAKRGQSAPAIPPNRSLNGVPEDDEDDTANDQFYSAAEDRYKTDAATTEMDTVTETEESDLSGVDHDDDLSDDFMDDMISLQAPTLPTTASGVSTMQPGTPMTIGRGRKTNGIATPASVFSNFTATTARPDRPRGRLFKAQGLIRPILIDLLHPKPAPEDDEEARIFVDIASLSKIGCFSGDWVRVEAAEEPPANGFGAFGLGSFTSLEPTESNWRPVRVYGLPEGYSQRPVTRIPSAKHGERRMSFFESQLQKPTSPTAYISPVLLANLESPSYLRLSPIKRGTYQGKGTLPKFTSASRPPYARDITIQHVRSPVTAERAYQSAVLGGLKRYFAQKIRLVRTGDLIAVPIDTQLGKALQEQPSANGSEVDDVMALAKDESCRFDQVAWFKVGHIQTQKTDADHDQTEDLWGGVACIDSSSVAMHGSGFATSRTPATKASTWPYYLGVKKMPMKSNGASALMVPEQDQRFVSPLRRRLRELLAAATSPRAIHLKMPPVAILLTSTHRNIGKATLASEACSDIGLHTYAIDAYDILSEAGTSGGDVKTEGLLRTRSERAMSCGPDTTALLIKHVEALTADRMVSTMKEILQDTRVLVATTSDVDKVPDGVRGLFSHELEVGAPDEAEREGILRTIVEDRGINLDPEVDLNGIALKTAALVAGDLVDVVDRALVAQRLRLEQISSKTGQAVTVRDLQVAGGAMARCVTKGDFDVAVEAARKNFAGAIGAPKIPNVTWDDVGGLNNVKDAVTETIQLPLERPELFAKGMKKRSGILFYGPPGTGKTLLAKAIATEYSLNFFSVKGPELLNMYIGESEANVRRVFQRARDARPCVVFFDELDSVAPKRGNQGDSGGVMDRIVSQLLAELDGMSGGDDTSGGVFVIGATNRPDLLDPALLRPGRFDKMLYLGVSDTHDKQLKILEALTRKFTLHPSVSLHSVAQQLPFTYTGADFYALCSDAMLKAVTRQAASVDAKIRELEAQPRSRTGPISTAYFFDHHATPEDIAVMVTEEDFLAANRELVPSVSAGELSHYEQVRAMFEGPPEKDRQQQQQQQQRPSGLRAVSGSSVVSKGKGKAIAGGSGKGKGKAVATGSDDEYGSEGEVAVVNGKGKGKGKAVAGFQDGTASDDEGLY</sequence>
<keyword id="KW-0067">ATP-binding</keyword>
<keyword id="KW-0963">Cytoplasm</keyword>
<keyword id="KW-0378">Hydrolase</keyword>
<keyword id="KW-0472">Membrane</keyword>
<keyword id="KW-0547">Nucleotide-binding</keyword>
<keyword id="KW-0576">Peroxisome</keyword>
<keyword id="KW-0962">Peroxisome biogenesis</keyword>
<keyword id="KW-1185">Reference proteome</keyword>
<proteinExistence type="inferred from homology"/>
<name>PEX6_COLOR</name>
<protein>
    <recommendedName>
        <fullName evidence="5">Peroxisomal ATPase PEX6</fullName>
        <ecNumber evidence="1">3.6.4.-</ecNumber>
    </recommendedName>
    <alternativeName>
        <fullName>ClaPEX6</fullName>
    </alternativeName>
    <alternativeName>
        <fullName>Peroxin-6</fullName>
    </alternativeName>
    <alternativeName>
        <fullName>Peroxisomal biogenesis factor 6</fullName>
    </alternativeName>
</protein>
<feature type="chain" id="PRO_0000084613" description="Peroxisomal ATPase PEX6">
    <location>
        <begin position="1"/>
        <end position="1388"/>
    </location>
</feature>
<feature type="region of interest" description="Disordered" evidence="3">
    <location>
        <begin position="1"/>
        <end position="29"/>
    </location>
</feature>
<feature type="region of interest" description="Disordered" evidence="3">
    <location>
        <begin position="169"/>
        <end position="192"/>
    </location>
</feature>
<feature type="region of interest" description="Disordered" evidence="3">
    <location>
        <begin position="262"/>
        <end position="287"/>
    </location>
</feature>
<feature type="region of interest" description="Disordered" evidence="3">
    <location>
        <begin position="302"/>
        <end position="323"/>
    </location>
</feature>
<feature type="region of interest" description="Disordered" evidence="3">
    <location>
        <begin position="346"/>
        <end position="365"/>
    </location>
</feature>
<feature type="region of interest" description="Disordered" evidence="3">
    <location>
        <begin position="1297"/>
        <end position="1388"/>
    </location>
</feature>
<feature type="compositionally biased region" description="Basic residues" evidence="3">
    <location>
        <begin position="14"/>
        <end position="23"/>
    </location>
</feature>
<feature type="compositionally biased region" description="Basic and acidic residues" evidence="3">
    <location>
        <begin position="169"/>
        <end position="178"/>
    </location>
</feature>
<feature type="compositionally biased region" description="Acidic residues" evidence="3">
    <location>
        <begin position="310"/>
        <end position="323"/>
    </location>
</feature>
<feature type="compositionally biased region" description="Polar residues" evidence="3">
    <location>
        <begin position="346"/>
        <end position="358"/>
    </location>
</feature>
<feature type="compositionally biased region" description="Low complexity" evidence="3">
    <location>
        <begin position="1319"/>
        <end position="1332"/>
    </location>
</feature>
<feature type="binding site" evidence="2">
    <location>
        <begin position="1034"/>
        <end position="1041"/>
    </location>
    <ligand>
        <name>ATP</name>
        <dbReference type="ChEBI" id="CHEBI:30616"/>
    </ligand>
</feature>
<feature type="sequence conflict" description="In Ref. 1; AAK16738." evidence="5" ref="1">
    <original>QGI</original>
    <variation>REY</variation>
    <location>
        <begin position="242"/>
        <end position="244"/>
    </location>
</feature>
<accession>Q9C1E9</accession>
<accession>A0A484G536</accession>
<accession>N4W2K6</accession>